<organism>
    <name type="scientific">Homo sapiens</name>
    <name type="common">Human</name>
    <dbReference type="NCBI Taxonomy" id="9606"/>
    <lineage>
        <taxon>Eukaryota</taxon>
        <taxon>Metazoa</taxon>
        <taxon>Chordata</taxon>
        <taxon>Craniata</taxon>
        <taxon>Vertebrata</taxon>
        <taxon>Euteleostomi</taxon>
        <taxon>Mammalia</taxon>
        <taxon>Eutheria</taxon>
        <taxon>Euarchontoglires</taxon>
        <taxon>Primates</taxon>
        <taxon>Haplorrhini</taxon>
        <taxon>Catarrhini</taxon>
        <taxon>Hominidae</taxon>
        <taxon>Homo</taxon>
    </lineage>
</organism>
<name>SH3L3_HUMAN</name>
<reference key="1">
    <citation type="journal article" date="2001" name="Biochem. Biophys. Res. Commun.">
        <title>A novel human homologue of the SH3BGR gene encodes a small protein similar to glutaredoxin 1 of Escherichia coli.</title>
        <authorList>
            <person name="Mazzocco M."/>
            <person name="Arrigo P."/>
            <person name="Egeo A."/>
            <person name="Maffei M."/>
            <person name="Vergano A."/>
            <person name="Di Lisi R."/>
            <person name="Ghiotto F."/>
            <person name="Ciccone E."/>
            <person name="Cinti R."/>
            <person name="Ravazzolo R."/>
            <person name="Scartezzini P."/>
        </authorList>
    </citation>
    <scope>NUCLEOTIDE SEQUENCE [MRNA]</scope>
    <scope>SUBCELLULAR LOCATION</scope>
    <scope>TISSUE SPECIFICITY</scope>
    <source>
        <tissue>Pancreas</tissue>
    </source>
</reference>
<reference key="2">
    <citation type="submission" date="2000-03" db="EMBL/GenBank/DDBJ databases">
        <title>Novel human SH3 domain binding protein SH3BP-1.</title>
        <authorList>
            <person name="Li N."/>
            <person name="Wan T."/>
            <person name="Zhang W."/>
            <person name="Cao X."/>
        </authorList>
    </citation>
    <scope>NUCLEOTIDE SEQUENCE [MRNA]</scope>
</reference>
<reference key="3">
    <citation type="submission" date="2000-09" db="EMBL/GenBank/DDBJ databases">
        <title>A catalog of genes in the human dermal papilla cells as identified by expressed sequence tags.</title>
        <authorList>
            <person name="Seo J.M."/>
            <person name="Kim M.K."/>
            <person name="Kim Y.H."/>
            <person name="Lee H.M."/>
            <person name="Hwang S.Y."/>
            <person name="Farooq M."/>
            <person name="Im S.U."/>
            <person name="Chung J.E."/>
            <person name="Kim J.C."/>
        </authorList>
    </citation>
    <scope>NUCLEOTIDE SEQUENCE [LARGE SCALE MRNA]</scope>
    <source>
        <tissue>Hair follicle dermal papilla</tissue>
    </source>
</reference>
<reference key="4">
    <citation type="journal article" date="2006" name="Nature">
        <title>The DNA sequence and biological annotation of human chromosome 1.</title>
        <authorList>
            <person name="Gregory S.G."/>
            <person name="Barlow K.F."/>
            <person name="McLay K.E."/>
            <person name="Kaul R."/>
            <person name="Swarbreck D."/>
            <person name="Dunham A."/>
            <person name="Scott C.E."/>
            <person name="Howe K.L."/>
            <person name="Woodfine K."/>
            <person name="Spencer C.C.A."/>
            <person name="Jones M.C."/>
            <person name="Gillson C."/>
            <person name="Searle S."/>
            <person name="Zhou Y."/>
            <person name="Kokocinski F."/>
            <person name="McDonald L."/>
            <person name="Evans R."/>
            <person name="Phillips K."/>
            <person name="Atkinson A."/>
            <person name="Cooper R."/>
            <person name="Jones C."/>
            <person name="Hall R.E."/>
            <person name="Andrews T.D."/>
            <person name="Lloyd C."/>
            <person name="Ainscough R."/>
            <person name="Almeida J.P."/>
            <person name="Ambrose K.D."/>
            <person name="Anderson F."/>
            <person name="Andrew R.W."/>
            <person name="Ashwell R.I.S."/>
            <person name="Aubin K."/>
            <person name="Babbage A.K."/>
            <person name="Bagguley C.L."/>
            <person name="Bailey J."/>
            <person name="Beasley H."/>
            <person name="Bethel G."/>
            <person name="Bird C.P."/>
            <person name="Bray-Allen S."/>
            <person name="Brown J.Y."/>
            <person name="Brown A.J."/>
            <person name="Buckley D."/>
            <person name="Burton J."/>
            <person name="Bye J."/>
            <person name="Carder C."/>
            <person name="Chapman J.C."/>
            <person name="Clark S.Y."/>
            <person name="Clarke G."/>
            <person name="Clee C."/>
            <person name="Cobley V."/>
            <person name="Collier R.E."/>
            <person name="Corby N."/>
            <person name="Coville G.J."/>
            <person name="Davies J."/>
            <person name="Deadman R."/>
            <person name="Dunn M."/>
            <person name="Earthrowl M."/>
            <person name="Ellington A.G."/>
            <person name="Errington H."/>
            <person name="Frankish A."/>
            <person name="Frankland J."/>
            <person name="French L."/>
            <person name="Garner P."/>
            <person name="Garnett J."/>
            <person name="Gay L."/>
            <person name="Ghori M.R.J."/>
            <person name="Gibson R."/>
            <person name="Gilby L.M."/>
            <person name="Gillett W."/>
            <person name="Glithero R.J."/>
            <person name="Grafham D.V."/>
            <person name="Griffiths C."/>
            <person name="Griffiths-Jones S."/>
            <person name="Grocock R."/>
            <person name="Hammond S."/>
            <person name="Harrison E.S.I."/>
            <person name="Hart E."/>
            <person name="Haugen E."/>
            <person name="Heath P.D."/>
            <person name="Holmes S."/>
            <person name="Holt K."/>
            <person name="Howden P.J."/>
            <person name="Hunt A.R."/>
            <person name="Hunt S.E."/>
            <person name="Hunter G."/>
            <person name="Isherwood J."/>
            <person name="James R."/>
            <person name="Johnson C."/>
            <person name="Johnson D."/>
            <person name="Joy A."/>
            <person name="Kay M."/>
            <person name="Kershaw J.K."/>
            <person name="Kibukawa M."/>
            <person name="Kimberley A.M."/>
            <person name="King A."/>
            <person name="Knights A.J."/>
            <person name="Lad H."/>
            <person name="Laird G."/>
            <person name="Lawlor S."/>
            <person name="Leongamornlert D.A."/>
            <person name="Lloyd D.M."/>
            <person name="Loveland J."/>
            <person name="Lovell J."/>
            <person name="Lush M.J."/>
            <person name="Lyne R."/>
            <person name="Martin S."/>
            <person name="Mashreghi-Mohammadi M."/>
            <person name="Matthews L."/>
            <person name="Matthews N.S.W."/>
            <person name="McLaren S."/>
            <person name="Milne S."/>
            <person name="Mistry S."/>
            <person name="Moore M.J.F."/>
            <person name="Nickerson T."/>
            <person name="O'Dell C.N."/>
            <person name="Oliver K."/>
            <person name="Palmeiri A."/>
            <person name="Palmer S.A."/>
            <person name="Parker A."/>
            <person name="Patel D."/>
            <person name="Pearce A.V."/>
            <person name="Peck A.I."/>
            <person name="Pelan S."/>
            <person name="Phelps K."/>
            <person name="Phillimore B.J."/>
            <person name="Plumb R."/>
            <person name="Rajan J."/>
            <person name="Raymond C."/>
            <person name="Rouse G."/>
            <person name="Saenphimmachak C."/>
            <person name="Sehra H.K."/>
            <person name="Sheridan E."/>
            <person name="Shownkeen R."/>
            <person name="Sims S."/>
            <person name="Skuce C.D."/>
            <person name="Smith M."/>
            <person name="Steward C."/>
            <person name="Subramanian S."/>
            <person name="Sycamore N."/>
            <person name="Tracey A."/>
            <person name="Tromans A."/>
            <person name="Van Helmond Z."/>
            <person name="Wall M."/>
            <person name="Wallis J.M."/>
            <person name="White S."/>
            <person name="Whitehead S.L."/>
            <person name="Wilkinson J.E."/>
            <person name="Willey D.L."/>
            <person name="Williams H."/>
            <person name="Wilming L."/>
            <person name="Wray P.W."/>
            <person name="Wu Z."/>
            <person name="Coulson A."/>
            <person name="Vaudin M."/>
            <person name="Sulston J.E."/>
            <person name="Durbin R.M."/>
            <person name="Hubbard T."/>
            <person name="Wooster R."/>
            <person name="Dunham I."/>
            <person name="Carter N.P."/>
            <person name="McVean G."/>
            <person name="Ross M.T."/>
            <person name="Harrow J."/>
            <person name="Olson M.V."/>
            <person name="Beck S."/>
            <person name="Rogers J."/>
            <person name="Bentley D.R."/>
        </authorList>
    </citation>
    <scope>NUCLEOTIDE SEQUENCE [LARGE SCALE GENOMIC DNA]</scope>
</reference>
<reference key="5">
    <citation type="journal article" date="2004" name="Genome Res.">
        <title>The status, quality, and expansion of the NIH full-length cDNA project: the Mammalian Gene Collection (MGC).</title>
        <authorList>
            <consortium name="The MGC Project Team"/>
        </authorList>
    </citation>
    <scope>NUCLEOTIDE SEQUENCE [LARGE SCALE MRNA]</scope>
    <source>
        <tissue>Lung</tissue>
    </source>
</reference>
<reference key="6">
    <citation type="journal article" date="1999" name="Cancer Res.">
        <title>Identification, characterization, and cloning of TIP-B1, a novel protein inhibitor of tumor necrosis factor-induced lysis.</title>
        <authorList>
            <person name="Berleth E.S."/>
            <person name="Nadadur S."/>
            <person name="Henn A.D."/>
            <person name="Eppolito C."/>
            <person name="Shiojiri S."/>
            <person name="Gurtoo H.L."/>
            <person name="Ehrke M.J."/>
            <person name="Mihich E."/>
        </authorList>
    </citation>
    <scope>PROTEIN SEQUENCE OF 19-31; 32-58 AND 60-70</scope>
    <scope>SUBCELLULAR LOCATION</scope>
</reference>
<reference key="7">
    <citation type="journal article" date="2000" name="Int. J. Immunopharmacol.">
        <title>A novel tumor necrosis factor-alpha inhibitory protein, TIP-B1.</title>
        <authorList>
            <person name="Berleth E.S."/>
            <person name="Henn A.D."/>
            <person name="Gurtoo H.L."/>
            <person name="Wollman R."/>
            <person name="Alderfer J.L."/>
            <person name="Mihich E."/>
            <person name="Ehrke M.J."/>
        </authorList>
    </citation>
    <scope>SUBCELLULAR LOCATION</scope>
</reference>
<reference key="8">
    <citation type="journal article" date="2001" name="FASEB J.">
        <title>Changes in cytosolic and membrane TNF inhibitory protein-B1 (TIP-B1) levels associated with protection from TNF-induced cytotoxicity.</title>
        <authorList>
            <person name="Henn A.D."/>
            <person name="Berleth E.S."/>
            <person name="Mihich E."/>
            <person name="Ehrke M.J."/>
        </authorList>
    </citation>
    <scope>SUBCELLULAR LOCATION</scope>
    <scope>GLYCOSYLATION</scope>
</reference>
<reference key="9">
    <citation type="journal article" date="2001" name="J. Leukoc. Biol.">
        <title>Expression, tissue distribution, and cellular localization of the antiapoptotic TIP-B1 protein.</title>
        <authorList>
            <person name="Berleth E.S."/>
            <person name="Masso-Welch P.A."/>
            <person name="Kazim L.A."/>
            <person name="Ip M.M."/>
            <person name="Mihich E."/>
            <person name="Ehrke M.J."/>
        </authorList>
    </citation>
    <scope>TISSUE SPECIFICITY</scope>
</reference>
<reference key="10">
    <citation type="journal article" date="2009" name="Anal. Chem.">
        <title>Lys-N and trypsin cover complementary parts of the phosphoproteome in a refined SCX-based approach.</title>
        <authorList>
            <person name="Gauci S."/>
            <person name="Helbig A.O."/>
            <person name="Slijper M."/>
            <person name="Krijgsveld J."/>
            <person name="Heck A.J."/>
            <person name="Mohammed S."/>
        </authorList>
    </citation>
    <scope>ACETYLATION [LARGE SCALE ANALYSIS] AT SER-2</scope>
    <scope>CLEAVAGE OF INITIATOR METHIONINE [LARGE SCALE ANALYSIS]</scope>
    <scope>IDENTIFICATION BY MASS SPECTROMETRY [LARGE SCALE ANALYSIS]</scope>
</reference>
<reference key="11">
    <citation type="journal article" date="2009" name="Sci. Signal.">
        <title>Quantitative phosphoproteomic analysis of T cell receptor signaling reveals system-wide modulation of protein-protein interactions.</title>
        <authorList>
            <person name="Mayya V."/>
            <person name="Lundgren D.H."/>
            <person name="Hwang S.-I."/>
            <person name="Rezaul K."/>
            <person name="Wu L."/>
            <person name="Eng J.K."/>
            <person name="Rodionov V."/>
            <person name="Han D.K."/>
        </authorList>
    </citation>
    <scope>IDENTIFICATION BY MASS SPECTROMETRY [LARGE SCALE ANALYSIS]</scope>
    <source>
        <tissue>Leukemic T-cell</tissue>
    </source>
</reference>
<reference key="12">
    <citation type="journal article" date="2011" name="BMC Syst. Biol.">
        <title>Initial characterization of the human central proteome.</title>
        <authorList>
            <person name="Burkard T.R."/>
            <person name="Planyavsky M."/>
            <person name="Kaupe I."/>
            <person name="Breitwieser F.P."/>
            <person name="Buerckstuemmer T."/>
            <person name="Bennett K.L."/>
            <person name="Superti-Furga G."/>
            <person name="Colinge J."/>
        </authorList>
    </citation>
    <scope>IDENTIFICATION BY MASS SPECTROMETRY [LARGE SCALE ANALYSIS]</scope>
</reference>
<reference key="13">
    <citation type="journal article" date="2014" name="J. Proteomics">
        <title>An enzyme assisted RP-RPLC approach for in-depth analysis of human liver phosphoproteome.</title>
        <authorList>
            <person name="Bian Y."/>
            <person name="Song C."/>
            <person name="Cheng K."/>
            <person name="Dong M."/>
            <person name="Wang F."/>
            <person name="Huang J."/>
            <person name="Sun D."/>
            <person name="Wang L."/>
            <person name="Ye M."/>
            <person name="Zou H."/>
        </authorList>
    </citation>
    <scope>IDENTIFICATION BY MASS SPECTROMETRY [LARGE SCALE ANALYSIS]</scope>
    <source>
        <tissue>Liver</tissue>
    </source>
</reference>
<reference key="14">
    <citation type="journal article" date="2015" name="Proteomics">
        <title>N-terminome analysis of the human mitochondrial proteome.</title>
        <authorList>
            <person name="Vaca Jacome A.S."/>
            <person name="Rabilloud T."/>
            <person name="Schaeffer-Reiss C."/>
            <person name="Rompais M."/>
            <person name="Ayoub D."/>
            <person name="Lane L."/>
            <person name="Bairoch A."/>
            <person name="Van Dorsselaer A."/>
            <person name="Carapito C."/>
        </authorList>
    </citation>
    <scope>IDENTIFICATION BY MASS SPECTROMETRY [LARGE SCALE ANALYSIS]</scope>
</reference>
<reference key="15">
    <citation type="journal article" date="2021" name="BMC Mol. Cell Biol.">
        <title>SH3BGRL3 binds to myosin 1c in a calcium dependent manner and modulates migration in the MDA-MB-231 cell line.</title>
        <authorList>
            <person name="Di Pisa F."/>
            <person name="Pesenti E."/>
            <person name="Bono M."/>
            <person name="Mazzarello A.N."/>
            <person name="Bernardi C."/>
            <person name="Lisanti M.P."/>
            <person name="Renzone G."/>
            <person name="Scaloni A."/>
            <person name="Ciccone E."/>
            <person name="Fais F."/>
            <person name="Bruno S."/>
            <person name="Scartezzini P."/>
            <person name="Ghiotto F."/>
        </authorList>
    </citation>
    <scope>FUNCTION</scope>
    <scope>INTERACTION WITH MYO1C</scope>
    <scope>SUBCELLULAR LOCATION</scope>
</reference>
<reference evidence="15" key="16">
    <citation type="journal article" date="2005" name="FEBS Lett.">
        <title>NMR structure and regulated expression in APL cell of human SH3BGRL3.</title>
        <authorList>
            <person name="Xu C."/>
            <person name="Zheng P."/>
            <person name="Shen S."/>
            <person name="Xu Y."/>
            <person name="Wei L."/>
            <person name="Gao H."/>
            <person name="Wang S."/>
            <person name="Zhu C."/>
            <person name="Tang Y."/>
            <person name="Wu J."/>
            <person name="Zhang Q."/>
            <person name="Shi Y."/>
        </authorList>
    </citation>
    <scope>STRUCTURE BY NMR</scope>
    <scope>FUNCTION</scope>
    <scope>SUBCELLULAR LOCATION</scope>
</reference>
<sequence length="93" mass="10438">MSGLRVYSTSVTGSREIKSQQSEVTRILDGKRIQYQLVDISQDNALRDEMRALAGNPKATPPQIVNGDQYCGDYELFVEAVEQNTLQEFLKLA</sequence>
<proteinExistence type="evidence at protein level"/>
<comment type="function">
    <text evidence="10 14">Could act as a modulator of glutaredoxin biological activity (Probable). May play a role in cytoskeleton organization (PubMed:34380438).</text>
</comment>
<comment type="subunit">
    <text evidence="1 10">Homodimer (By similarity). Interacts with MYO1C (via its IQ motifs); the interaction is dependent on calcium and takes place at membrane ruffles (PubMed:34380438).</text>
</comment>
<comment type="interaction">
    <interactant intactId="EBI-5234893">
        <id>Q9H299</id>
    </interactant>
    <interactant intactId="EBI-742054">
        <id>Q96D03</id>
        <label>DDIT4L</label>
    </interactant>
    <organismsDiffer>false</organismsDiffer>
    <experiments>3</experiments>
</comment>
<comment type="subcellular location">
    <subcellularLocation>
        <location evidence="4 5 6 9">Cytoplasm</location>
        <location evidence="4 5 6 9">Cytosol</location>
    </subcellularLocation>
    <subcellularLocation>
        <location evidence="10 13">Cell projection</location>
        <location evidence="10 13">Ruffle membrane</location>
    </subcellularLocation>
    <subcellularLocation>
        <location evidence="8">Nucleus</location>
    </subcellularLocation>
</comment>
<comment type="tissue specificity">
    <text evidence="7 8">Ubiquitous (PubMed:11404387, PubMed:11444877). Expressed in heart, kidney and liver (at protein level) (PubMed:11404387). Expressed in brain, lung, spleen and skeletal muscle (PubMed:11404387).</text>
</comment>
<comment type="PTM">
    <text evidence="13">May be glycosylated.</text>
</comment>
<comment type="similarity">
    <text evidence="12">Belongs to the SH3BGR family.</text>
</comment>
<protein>
    <recommendedName>
        <fullName>SH3 domain-binding glutamic acid-rich-like protein 3</fullName>
    </recommendedName>
    <alternativeName>
        <fullName>SH3 domain-binding protein 1</fullName>
        <shortName>SH3BP-1</shortName>
    </alternativeName>
    <alternativeName>
        <fullName evidence="11">TNF inhibitory protein B1</fullName>
        <shortName evidence="11">TIP-B1</shortName>
    </alternativeName>
</protein>
<keyword id="KW-0002">3D-structure</keyword>
<keyword id="KW-0007">Acetylation</keyword>
<keyword id="KW-1003">Cell membrane</keyword>
<keyword id="KW-0966">Cell projection</keyword>
<keyword id="KW-0963">Cytoplasm</keyword>
<keyword id="KW-0903">Direct protein sequencing</keyword>
<keyword id="KW-0325">Glycoprotein</keyword>
<keyword id="KW-0472">Membrane</keyword>
<keyword id="KW-0539">Nucleus</keyword>
<keyword id="KW-1267">Proteomics identification</keyword>
<keyword id="KW-1185">Reference proteome</keyword>
<accession>Q9H299</accession>
<accession>Q5T122</accession>
<dbReference type="EMBL" id="AJ297915">
    <property type="protein sequence ID" value="CAC35770.1"/>
    <property type="molecule type" value="mRNA"/>
</dbReference>
<dbReference type="EMBL" id="AF247790">
    <property type="protein sequence ID" value="AAL95695.1"/>
    <property type="molecule type" value="mRNA"/>
</dbReference>
<dbReference type="EMBL" id="AF304163">
    <property type="protein sequence ID" value="AAG41412.1"/>
    <property type="molecule type" value="mRNA"/>
</dbReference>
<dbReference type="EMBL" id="AL451139">
    <property type="status" value="NOT_ANNOTATED_CDS"/>
    <property type="molecule type" value="Genomic_DNA"/>
</dbReference>
<dbReference type="EMBL" id="BC030135">
    <property type="protein sequence ID" value="AAH30135.1"/>
    <property type="molecule type" value="mRNA"/>
</dbReference>
<dbReference type="CCDS" id="CCDS278.1"/>
<dbReference type="PIR" id="JC7711">
    <property type="entry name" value="JC7711"/>
</dbReference>
<dbReference type="RefSeq" id="NP_112576.1">
    <property type="nucleotide sequence ID" value="NM_031286.4"/>
</dbReference>
<dbReference type="PDB" id="1SJ6">
    <property type="method" value="NMR"/>
    <property type="chains" value="A=1-93"/>
</dbReference>
<dbReference type="PDBsum" id="1SJ6"/>
<dbReference type="BMRB" id="Q9H299"/>
<dbReference type="SMR" id="Q9H299"/>
<dbReference type="BioGRID" id="123644">
    <property type="interactions" value="57"/>
</dbReference>
<dbReference type="FunCoup" id="Q9H299">
    <property type="interactions" value="476"/>
</dbReference>
<dbReference type="IntAct" id="Q9H299">
    <property type="interactions" value="11"/>
</dbReference>
<dbReference type="MINT" id="Q9H299"/>
<dbReference type="STRING" id="9606.ENSP00000270792"/>
<dbReference type="GlyGen" id="Q9H299">
    <property type="glycosylation" value="2 sites, 1 O-linked glycan (1 site)"/>
</dbReference>
<dbReference type="iPTMnet" id="Q9H299"/>
<dbReference type="MetOSite" id="Q9H299"/>
<dbReference type="PhosphoSitePlus" id="Q9H299"/>
<dbReference type="SwissPalm" id="Q9H299"/>
<dbReference type="BioMuta" id="SH3BGRL3"/>
<dbReference type="DMDM" id="24638222"/>
<dbReference type="jPOST" id="Q9H299"/>
<dbReference type="MassIVE" id="Q9H299"/>
<dbReference type="PaxDb" id="9606-ENSP00000270792"/>
<dbReference type="PeptideAtlas" id="Q9H299"/>
<dbReference type="ProteomicsDB" id="80514"/>
<dbReference type="Pumba" id="Q9H299"/>
<dbReference type="TopDownProteomics" id="Q9H299"/>
<dbReference type="Antibodypedia" id="30595">
    <property type="antibodies" value="132 antibodies from 24 providers"/>
</dbReference>
<dbReference type="DNASU" id="83442"/>
<dbReference type="Ensembl" id="ENST00000270792.10">
    <property type="protein sequence ID" value="ENSP00000270792.5"/>
    <property type="gene ID" value="ENSG00000142669.15"/>
</dbReference>
<dbReference type="GeneID" id="83442"/>
<dbReference type="KEGG" id="hsa:83442"/>
<dbReference type="MANE-Select" id="ENST00000270792.10">
    <property type="protein sequence ID" value="ENSP00000270792.5"/>
    <property type="RefSeq nucleotide sequence ID" value="NM_031286.4"/>
    <property type="RefSeq protein sequence ID" value="NP_112576.1"/>
</dbReference>
<dbReference type="UCSC" id="uc001blu.4">
    <property type="organism name" value="human"/>
</dbReference>
<dbReference type="AGR" id="HGNC:15568"/>
<dbReference type="CTD" id="83442"/>
<dbReference type="DisGeNET" id="83442"/>
<dbReference type="GeneCards" id="SH3BGRL3"/>
<dbReference type="HGNC" id="HGNC:15568">
    <property type="gene designation" value="SH3BGRL3"/>
</dbReference>
<dbReference type="HPA" id="ENSG00000142669">
    <property type="expression patterns" value="Low tissue specificity"/>
</dbReference>
<dbReference type="MIM" id="615679">
    <property type="type" value="gene"/>
</dbReference>
<dbReference type="neXtProt" id="NX_Q9H299"/>
<dbReference type="OpenTargets" id="ENSG00000142669"/>
<dbReference type="PharmGKB" id="PA37979"/>
<dbReference type="VEuPathDB" id="HostDB:ENSG00000142669"/>
<dbReference type="eggNOG" id="KOG4023">
    <property type="taxonomic scope" value="Eukaryota"/>
</dbReference>
<dbReference type="GeneTree" id="ENSGT00940000157260"/>
<dbReference type="HOGENOM" id="CLU_084862_3_1_1"/>
<dbReference type="InParanoid" id="Q9H299"/>
<dbReference type="OMA" id="QAEMMRI"/>
<dbReference type="OrthoDB" id="9932926at2759"/>
<dbReference type="PAN-GO" id="Q9H299">
    <property type="GO annotations" value="0 GO annotations based on evolutionary models"/>
</dbReference>
<dbReference type="PhylomeDB" id="Q9H299"/>
<dbReference type="TreeFam" id="TF105574"/>
<dbReference type="PathwayCommons" id="Q9H299"/>
<dbReference type="SignaLink" id="Q9H299"/>
<dbReference type="BioGRID-ORCS" id="83442">
    <property type="hits" value="20 hits in 1154 CRISPR screens"/>
</dbReference>
<dbReference type="ChiTaRS" id="SH3BGRL3">
    <property type="organism name" value="human"/>
</dbReference>
<dbReference type="EvolutionaryTrace" id="Q9H299"/>
<dbReference type="GeneWiki" id="SH3BGRL3"/>
<dbReference type="GenomeRNAi" id="83442"/>
<dbReference type="Pharos" id="Q9H299">
    <property type="development level" value="Tbio"/>
</dbReference>
<dbReference type="PRO" id="PR:Q9H299"/>
<dbReference type="Proteomes" id="UP000005640">
    <property type="component" value="Chromosome 1"/>
</dbReference>
<dbReference type="RNAct" id="Q9H299">
    <property type="molecule type" value="protein"/>
</dbReference>
<dbReference type="Bgee" id="ENSG00000142669">
    <property type="expression patterns" value="Expressed in granulocyte and 195 other cell types or tissues"/>
</dbReference>
<dbReference type="ExpressionAtlas" id="Q9H299">
    <property type="expression patterns" value="baseline and differential"/>
</dbReference>
<dbReference type="GO" id="GO:0005737">
    <property type="term" value="C:cytoplasm"/>
    <property type="evidence" value="ECO:0000318"/>
    <property type="project" value="GO_Central"/>
</dbReference>
<dbReference type="GO" id="GO:0005829">
    <property type="term" value="C:cytosol"/>
    <property type="evidence" value="ECO:0000314"/>
    <property type="project" value="UniProtKB"/>
</dbReference>
<dbReference type="GO" id="GO:0070062">
    <property type="term" value="C:extracellular exosome"/>
    <property type="evidence" value="ECO:0007005"/>
    <property type="project" value="UniProtKB"/>
</dbReference>
<dbReference type="GO" id="GO:0016604">
    <property type="term" value="C:nuclear body"/>
    <property type="evidence" value="ECO:0000314"/>
    <property type="project" value="HPA"/>
</dbReference>
<dbReference type="GO" id="GO:0032587">
    <property type="term" value="C:ruffle membrane"/>
    <property type="evidence" value="ECO:0000315"/>
    <property type="project" value="UniProtKB"/>
</dbReference>
<dbReference type="GO" id="GO:0007010">
    <property type="term" value="P:cytoskeleton organization"/>
    <property type="evidence" value="ECO:0000315"/>
    <property type="project" value="UniProtKB"/>
</dbReference>
<dbReference type="CDD" id="cd03030">
    <property type="entry name" value="GRX_SH3BGR"/>
    <property type="match status" value="1"/>
</dbReference>
<dbReference type="FunFam" id="3.40.30.10:FF:000132">
    <property type="entry name" value="SH3 domain-binding glutamic acid-rich-like protein 3"/>
    <property type="match status" value="1"/>
</dbReference>
<dbReference type="Gene3D" id="3.40.30.10">
    <property type="entry name" value="Glutaredoxin"/>
    <property type="match status" value="1"/>
</dbReference>
<dbReference type="InterPro" id="IPR006993">
    <property type="entry name" value="Glut_rich_SH3-bd"/>
</dbReference>
<dbReference type="InterPro" id="IPR051033">
    <property type="entry name" value="SH3BGR"/>
</dbReference>
<dbReference type="InterPro" id="IPR036249">
    <property type="entry name" value="Thioredoxin-like_sf"/>
</dbReference>
<dbReference type="PANTHER" id="PTHR12232">
    <property type="entry name" value="SH3 DOMAIN-BINDING GLUTAMIC ACID-RICH-LIKE PROTEIN"/>
    <property type="match status" value="1"/>
</dbReference>
<dbReference type="PANTHER" id="PTHR12232:SF3">
    <property type="entry name" value="SH3 DOMAIN-BINDING GLUTAMIC ACID-RICH-LIKE PROTEIN 3"/>
    <property type="match status" value="1"/>
</dbReference>
<dbReference type="Pfam" id="PF04908">
    <property type="entry name" value="SH3BGR"/>
    <property type="match status" value="1"/>
</dbReference>
<dbReference type="PIRSF" id="PIRSF008142">
    <property type="entry name" value="SH3-bind_E-rich_L"/>
    <property type="match status" value="1"/>
</dbReference>
<dbReference type="SUPFAM" id="SSF52833">
    <property type="entry name" value="Thioredoxin-like"/>
    <property type="match status" value="1"/>
</dbReference>
<dbReference type="PROSITE" id="PS51354">
    <property type="entry name" value="GLUTAREDOXIN_2"/>
    <property type="match status" value="1"/>
</dbReference>
<evidence type="ECO:0000250" key="1">
    <source>
        <dbReference type="UniProtKB" id="Q91VW3"/>
    </source>
</evidence>
<evidence type="ECO:0000255" key="2"/>
<evidence type="ECO:0000255" key="3">
    <source>
        <dbReference type="PROSITE-ProRule" id="PRU00686"/>
    </source>
</evidence>
<evidence type="ECO:0000269" key="4">
    <source>
    </source>
</evidence>
<evidence type="ECO:0000269" key="5">
    <source>
    </source>
</evidence>
<evidence type="ECO:0000269" key="6">
    <source>
    </source>
</evidence>
<evidence type="ECO:0000269" key="7">
    <source>
    </source>
</evidence>
<evidence type="ECO:0000269" key="8">
    <source>
    </source>
</evidence>
<evidence type="ECO:0000269" key="9">
    <source>
    </source>
</evidence>
<evidence type="ECO:0000269" key="10">
    <source>
    </source>
</evidence>
<evidence type="ECO:0000303" key="11">
    <source>
    </source>
</evidence>
<evidence type="ECO:0000305" key="12"/>
<evidence type="ECO:0000305" key="13">
    <source>
    </source>
</evidence>
<evidence type="ECO:0000305" key="14">
    <source>
    </source>
</evidence>
<evidence type="ECO:0007744" key="15">
    <source>
        <dbReference type="PDB" id="1SJ6"/>
    </source>
</evidence>
<evidence type="ECO:0007744" key="16">
    <source>
    </source>
</evidence>
<evidence type="ECO:0007829" key="17">
    <source>
        <dbReference type="PDB" id="1SJ6"/>
    </source>
</evidence>
<gene>
    <name type="primary">SH3BGRL3</name>
    <name type="ORF">P1725</name>
</gene>
<feature type="initiator methionine" description="Removed" evidence="16">
    <location>
        <position position="1"/>
    </location>
</feature>
<feature type="chain" id="PRO_0000220749" description="SH3 domain-binding glutamic acid-rich-like protein 3">
    <location>
        <begin position="2"/>
        <end position="93"/>
    </location>
</feature>
<feature type="domain" description="Glutaredoxin" evidence="3">
    <location>
        <begin position="2"/>
        <end position="93"/>
    </location>
</feature>
<feature type="modified residue" description="N-acetylserine" evidence="16">
    <location>
        <position position="2"/>
    </location>
</feature>
<feature type="glycosylation site" description="O-linked (GalNAc...) threonine" evidence="2">
    <location>
        <position position="9"/>
    </location>
</feature>
<feature type="strand" evidence="17">
    <location>
        <begin position="5"/>
        <end position="8"/>
    </location>
</feature>
<feature type="strand" evidence="17">
    <location>
        <begin position="14"/>
        <end position="16"/>
    </location>
</feature>
<feature type="helix" evidence="17">
    <location>
        <begin position="17"/>
        <end position="30"/>
    </location>
</feature>
<feature type="strand" evidence="17">
    <location>
        <begin position="36"/>
        <end position="39"/>
    </location>
</feature>
<feature type="helix" evidence="17">
    <location>
        <begin position="44"/>
        <end position="53"/>
    </location>
</feature>
<feature type="strand" evidence="17">
    <location>
        <begin position="63"/>
        <end position="73"/>
    </location>
</feature>
<feature type="helix" evidence="17">
    <location>
        <begin position="74"/>
        <end position="81"/>
    </location>
</feature>
<feature type="turn" evidence="17">
    <location>
        <begin position="82"/>
        <end position="84"/>
    </location>
</feature>
<feature type="helix" evidence="17">
    <location>
        <begin position="86"/>
        <end position="90"/>
    </location>
</feature>